<protein>
    <recommendedName>
        <fullName>Chloroplastic group IIA intron splicing facilitator CRS1, chloroplastic</fullName>
    </recommendedName>
    <alternativeName>
        <fullName>Chloroplastic RNA splicing factor 1</fullName>
    </alternativeName>
    <alternativeName>
        <fullName>Protein CHLOROPLAST RNA SPLICING 1</fullName>
    </alternativeName>
</protein>
<name>CRS1_MAIZE</name>
<comment type="function">
    <text evidence="4 5 6">Required for the splicing of group IIA introns in chloroplasts, and especially for atpF, by regulating the intron folding. Forms splicing particles with RNA. Also involved in chloroplast protein translation.</text>
</comment>
<comment type="biophysicochemical properties">
    <phDependence>
        <text>Optimum pH is 7-7.5.</text>
    </phDependence>
    <temperatureDependence>
        <text>Optimum temperature is 25-30 degrees Celsius.</text>
    </temperatureDependence>
</comment>
<comment type="subunit">
    <text evidence="5 6">Homodimer. Interacts with RNA, specifically with atpF intron. Part of large ribonucleo-protein complexes that include group IIA introns and CRS1.</text>
</comment>
<comment type="subcellular location">
    <subcellularLocation>
        <location evidence="5">Plastid</location>
        <location evidence="5">Chloroplast stroma</location>
    </subcellularLocation>
</comment>
<comment type="alternative products">
    <event type="alternative splicing"/>
    <isoform>
        <id>Q9FYT6-1</id>
        <name>1</name>
        <sequence type="displayed"/>
    </isoform>
    <text>A number of isoforms are produced. According to EST sequences.</text>
</comment>
<comment type="tissue specificity">
    <text evidence="5">More expressed in leaves than in roots.</text>
</comment>
<proteinExistence type="evidence at protein level"/>
<keyword id="KW-0025">Alternative splicing</keyword>
<keyword id="KW-0150">Chloroplast</keyword>
<keyword id="KW-0175">Coiled coil</keyword>
<keyword id="KW-0507">mRNA processing</keyword>
<keyword id="KW-0508">mRNA splicing</keyword>
<keyword id="KW-0934">Plastid</keyword>
<keyword id="KW-1185">Reference proteome</keyword>
<keyword id="KW-0677">Repeat</keyword>
<keyword id="KW-0687">Ribonucleoprotein</keyword>
<keyword id="KW-0694">RNA-binding</keyword>
<keyword id="KW-0809">Transit peptide</keyword>
<keyword id="KW-0810">Translation regulation</keyword>
<accession>Q9FYT6</accession>
<organism>
    <name type="scientific">Zea mays</name>
    <name type="common">Maize</name>
    <dbReference type="NCBI Taxonomy" id="4577"/>
    <lineage>
        <taxon>Eukaryota</taxon>
        <taxon>Viridiplantae</taxon>
        <taxon>Streptophyta</taxon>
        <taxon>Embryophyta</taxon>
        <taxon>Tracheophyta</taxon>
        <taxon>Spermatophyta</taxon>
        <taxon>Magnoliopsida</taxon>
        <taxon>Liliopsida</taxon>
        <taxon>Poales</taxon>
        <taxon>Poaceae</taxon>
        <taxon>PACMAD clade</taxon>
        <taxon>Panicoideae</taxon>
        <taxon>Andropogonodae</taxon>
        <taxon>Andropogoneae</taxon>
        <taxon>Tripsacinae</taxon>
        <taxon>Zea</taxon>
    </lineage>
</organism>
<gene>
    <name type="primary">CRS1</name>
</gene>
<evidence type="ECO:0000255" key="1"/>
<evidence type="ECO:0000255" key="2">
    <source>
        <dbReference type="PROSITE-ProRule" id="PRU00626"/>
    </source>
</evidence>
<evidence type="ECO:0000256" key="3">
    <source>
        <dbReference type="SAM" id="MobiDB-lite"/>
    </source>
</evidence>
<evidence type="ECO:0000269" key="4">
    <source>
    </source>
</evidence>
<evidence type="ECO:0000269" key="5">
    <source>
    </source>
</evidence>
<evidence type="ECO:0000269" key="6">
    <source>
    </source>
</evidence>
<feature type="transit peptide" description="Chloroplast" evidence="1">
    <location>
        <begin position="1"/>
        <end position="40"/>
    </location>
</feature>
<feature type="chain" id="PRO_0000283625" description="Chloroplastic group IIA intron splicing facilitator CRS1, chloroplastic">
    <location>
        <begin position="41"/>
        <end position="715"/>
    </location>
</feature>
<feature type="domain" description="CRM 1" evidence="2">
    <location>
        <begin position="168"/>
        <end position="265"/>
    </location>
</feature>
<feature type="domain" description="CRM 2" evidence="2">
    <location>
        <begin position="350"/>
        <end position="447"/>
    </location>
</feature>
<feature type="domain" description="CRM 3" evidence="2">
    <location>
        <begin position="562"/>
        <end position="662"/>
    </location>
</feature>
<feature type="region of interest" description="Disordered" evidence="3">
    <location>
        <begin position="1"/>
        <end position="76"/>
    </location>
</feature>
<feature type="coiled-coil region" evidence="1">
    <location>
        <begin position="448"/>
        <end position="473"/>
    </location>
</feature>
<feature type="coiled-coil region" evidence="1">
    <location>
        <begin position="502"/>
        <end position="550"/>
    </location>
</feature>
<feature type="compositionally biased region" description="Pro residues" evidence="3">
    <location>
        <begin position="1"/>
        <end position="21"/>
    </location>
</feature>
<reference key="1">
    <citation type="journal article" date="2001" name="RNA">
        <title>CRS1 is a novel group II intron splicing factor that was derived from a domain of ancient origin.</title>
        <authorList>
            <person name="Till B."/>
            <person name="Schmitz-Linneweber C."/>
            <person name="Williams-Carrier R."/>
            <person name="Barkan A."/>
        </authorList>
    </citation>
    <scope>NUCLEOTIDE SEQUENCE [MRNA] (ISOFORM 1)</scope>
    <scope>FUNCTION</scope>
    <scope>SUBCELLULAR LOCATION</scope>
    <scope>ALTERNATIVE SPLICING</scope>
    <scope>TISSUE SPECIFICITY</scope>
    <scope>INTERACTION WITH RNA</scope>
</reference>
<reference key="2">
    <citation type="journal article" date="1999" name="Nucleic Acids Res.">
        <title>Comparative analysis of splicing of the complete set of chloroplast group II introns in three higher plant mutants.</title>
        <authorList>
            <person name="Vogel J."/>
            <person name="Boerner T."/>
            <person name="Hess W.R."/>
        </authorList>
    </citation>
    <scope>FUNCTION</scope>
</reference>
<reference key="3">
    <citation type="journal article" date="2005" name="Plant Cell">
        <title>CRS1, a chloroplast group II intron splicing factor, promotes intron folding through specific interactions with two intron domains.</title>
        <authorList>
            <person name="Ostersetzer O."/>
            <person name="Cooke A.M."/>
            <person name="Watkins K.P."/>
            <person name="Barkan A."/>
        </authorList>
    </citation>
    <scope>FUNCTION</scope>
    <scope>HOMODIMER</scope>
    <scope>INTERACTION WITH ATPF INTRON</scope>
</reference>
<sequence>MAPPPLPLFSPSLKAPPPPPWLHGSSTQSRDSAPPVPPLPAEATPSKFRIDSPKPAPARKNTKTAAKPLTAGVPGGRTHRAVLGIIRRVRSLELSDAPSPNSVHTSNSGAAAAAFHLTIELSPPREPGQYVVEKEKSRAVPWAAARDEGLKVALRREKKPREPTRAETELETHELRRLRRLARGIGRWARAKKAGVTDEVVKEVRREWASGEELAAVRIVEPLRRSMDRAREILEIKTGGLVVWTKGDMHFVYRGSKYQQNAKHSHTFLTNVHKDDAFQENDQSICGQKDEEPVKGTLYEREVNRLLDTLGPRFVDWWWDTPLPVDADLLPEFVPGSKTPYRLCPPGVRPTLADEELTYLRKLARLLPTHFALGRNTRLQGLAAAILKLWEKSLIAKIAVKIGIQNTNNEQMAWNLKHLTGGTVILRNKDFIILYRGKDFLPGGVAQTVIQREAQVHDEQVKEEEARLKAVDSLQMVGELSEESSLGTFREYQGFHAKFVHENTENSNTMIELEAEKYRLEKELKDHEWKLSVLNKKIERSNQALAKLHSSWSPSEQSADREHLTEEEKIMFRRIGRKMDGLVLLGRRGIFDGVIEEIHQHWKHKEVVKVITKQNQTRQIMYAASLLEVETGGILIAVEKLTTSHAIILYRGKNYRRPAKSSFSNLLTKREALRRSIEVQRRGSMKYFVRERQKSILELKRKLRYVTRQIRYRTP</sequence>
<dbReference type="EMBL" id="AF290414">
    <property type="protein sequence ID" value="AAG00595.1"/>
    <property type="molecule type" value="mRNA"/>
</dbReference>
<dbReference type="RefSeq" id="NP_001105008.1">
    <molecule id="Q9FYT6-1"/>
    <property type="nucleotide sequence ID" value="NM_001111538.2"/>
</dbReference>
<dbReference type="SMR" id="Q9FYT6"/>
<dbReference type="DIP" id="DIP-48743N"/>
<dbReference type="FunCoup" id="Q9FYT6">
    <property type="interactions" value="1551"/>
</dbReference>
<dbReference type="IntAct" id="Q9FYT6">
    <property type="interactions" value="1"/>
</dbReference>
<dbReference type="STRING" id="4577.Q9FYT6"/>
<dbReference type="PaxDb" id="4577-GRMZM2G078412_P01"/>
<dbReference type="GeneID" id="541870"/>
<dbReference type="KEGG" id="zma:541870"/>
<dbReference type="MaizeGDB" id="106357"/>
<dbReference type="eggNOG" id="KOG1990">
    <property type="taxonomic scope" value="Eukaryota"/>
</dbReference>
<dbReference type="InParanoid" id="Q9FYT6"/>
<dbReference type="OrthoDB" id="551352at2759"/>
<dbReference type="Proteomes" id="UP000007305">
    <property type="component" value="Unplaced"/>
</dbReference>
<dbReference type="ExpressionAtlas" id="Q9FYT6">
    <property type="expression patterns" value="baseline and differential"/>
</dbReference>
<dbReference type="GO" id="GO:0009570">
    <property type="term" value="C:chloroplast stroma"/>
    <property type="evidence" value="ECO:0007669"/>
    <property type="project" value="UniProtKB-SubCell"/>
</dbReference>
<dbReference type="GO" id="GO:1990904">
    <property type="term" value="C:ribonucleoprotein complex"/>
    <property type="evidence" value="ECO:0007669"/>
    <property type="project" value="UniProtKB-KW"/>
</dbReference>
<dbReference type="GO" id="GO:0003729">
    <property type="term" value="F:mRNA binding"/>
    <property type="evidence" value="ECO:0007669"/>
    <property type="project" value="InterPro"/>
</dbReference>
<dbReference type="GO" id="GO:0000373">
    <property type="term" value="P:Group II intron splicing"/>
    <property type="evidence" value="ECO:0007669"/>
    <property type="project" value="UniProtKB-ARBA"/>
</dbReference>
<dbReference type="GO" id="GO:0006397">
    <property type="term" value="P:mRNA processing"/>
    <property type="evidence" value="ECO:0007669"/>
    <property type="project" value="UniProtKB-KW"/>
</dbReference>
<dbReference type="GO" id="GO:0006417">
    <property type="term" value="P:regulation of translation"/>
    <property type="evidence" value="ECO:0007669"/>
    <property type="project" value="UniProtKB-KW"/>
</dbReference>
<dbReference type="FunFam" id="3.30.110.60:FF:000002">
    <property type="entry name" value="CRS2-associated factor 1, chloroplastic"/>
    <property type="match status" value="1"/>
</dbReference>
<dbReference type="Gene3D" id="3.30.110.60">
    <property type="entry name" value="YhbY-like"/>
    <property type="match status" value="3"/>
</dbReference>
<dbReference type="InterPro" id="IPR045278">
    <property type="entry name" value="CRS1/CFM2/CFM3"/>
</dbReference>
<dbReference type="InterPro" id="IPR001890">
    <property type="entry name" value="RNA-binding_CRM"/>
</dbReference>
<dbReference type="InterPro" id="IPR035920">
    <property type="entry name" value="YhbY-like_sf"/>
</dbReference>
<dbReference type="PANTHER" id="PTHR31846:SF10">
    <property type="entry name" value="CHLOROPLASTIC GROUP IIA INTRON SPLICING FACILITATOR CRS1, CHLOROPLASTIC"/>
    <property type="match status" value="1"/>
</dbReference>
<dbReference type="PANTHER" id="PTHR31846">
    <property type="entry name" value="CRS1 / YHBY (CRM) DOMAIN-CONTAINING PROTEIN"/>
    <property type="match status" value="1"/>
</dbReference>
<dbReference type="Pfam" id="PF01985">
    <property type="entry name" value="CRS1_YhbY"/>
    <property type="match status" value="3"/>
</dbReference>
<dbReference type="SMART" id="SM01103">
    <property type="entry name" value="CRS1_YhbY"/>
    <property type="match status" value="3"/>
</dbReference>
<dbReference type="SUPFAM" id="SSF75471">
    <property type="entry name" value="YhbY-like"/>
    <property type="match status" value="3"/>
</dbReference>
<dbReference type="PROSITE" id="PS51295">
    <property type="entry name" value="CRM"/>
    <property type="match status" value="3"/>
</dbReference>